<gene>
    <name evidence="1" type="primary">rbsA</name>
    <name type="ordered locus">BH3730</name>
</gene>
<proteinExistence type="inferred from homology"/>
<reference key="1">
    <citation type="journal article" date="2000" name="Nucleic Acids Res.">
        <title>Complete genome sequence of the alkaliphilic bacterium Bacillus halodurans and genomic sequence comparison with Bacillus subtilis.</title>
        <authorList>
            <person name="Takami H."/>
            <person name="Nakasone K."/>
            <person name="Takaki Y."/>
            <person name="Maeno G."/>
            <person name="Sasaki R."/>
            <person name="Masui N."/>
            <person name="Fuji F."/>
            <person name="Hirama C."/>
            <person name="Nakamura Y."/>
            <person name="Ogasawara N."/>
            <person name="Kuhara S."/>
            <person name="Horikoshi K."/>
        </authorList>
    </citation>
    <scope>NUCLEOTIDE SEQUENCE [LARGE SCALE GENOMIC DNA]</scope>
    <source>
        <strain>ATCC BAA-125 / DSM 18197 / FERM 7344 / JCM 9153 / C-125</strain>
    </source>
</reference>
<sequence>MIVEMTGIHKSFSGNPVLKDVSFTLEKGEIHALMGENGAGKSTLMKILTGIYERDSGTVKIKGREVHYKHPKEAEADGLAVIHQELNILPELTVAENLFVGKERTYGKTGWIKSKEMNRLAEEKLAELGLKVKGTERAGNLSVGKQQLIEIAKALMTNADIIIMDEPTAALTDREIDTLFATVRELQKKGVTFVYISHRMEEIFSLCQRITVLRDGEYVGTKVIAETSFDEIVKMMVGRALGNRFPEHTLTPGDVKLEIKHLTRAGEFENVSLSVRAGEILGISGLMGAGRSELVETIFGYRKADSGEVWIDGKQAAIKGPDQAIAQGIGFVSEDRKSKGLIVDFSIRDNISLTNLSRISTSSWISSEKERSLYEELAKKLHVKASGPSQQAKSLSGGNQQKIVIAKWLGIEPKILILDEPTRGVDVGAKKEIYTIMNELAKQGVAIIMVSSELPEVIGLSTRVAVMFEGKLMHILERDELSEETIMHYATGGDKHVRQ</sequence>
<feature type="chain" id="PRO_0000261041" description="Ribose import ATP-binding protein RbsA">
    <location>
        <begin position="1"/>
        <end position="499"/>
    </location>
</feature>
<feature type="domain" description="ABC transporter 1" evidence="1">
    <location>
        <begin position="3"/>
        <end position="240"/>
    </location>
</feature>
<feature type="domain" description="ABC transporter 2" evidence="1">
    <location>
        <begin position="250"/>
        <end position="494"/>
    </location>
</feature>
<feature type="binding site" evidence="1">
    <location>
        <begin position="35"/>
        <end position="42"/>
    </location>
    <ligand>
        <name>ATP</name>
        <dbReference type="ChEBI" id="CHEBI:30616"/>
    </ligand>
</feature>
<keyword id="KW-0067">ATP-binding</keyword>
<keyword id="KW-1003">Cell membrane</keyword>
<keyword id="KW-0472">Membrane</keyword>
<keyword id="KW-0547">Nucleotide-binding</keyword>
<keyword id="KW-1185">Reference proteome</keyword>
<keyword id="KW-0677">Repeat</keyword>
<keyword id="KW-0762">Sugar transport</keyword>
<keyword id="KW-1278">Translocase</keyword>
<keyword id="KW-0813">Transport</keyword>
<dbReference type="EC" id="7.5.2.7" evidence="1"/>
<dbReference type="EMBL" id="BA000004">
    <property type="protein sequence ID" value="BAB07449.1"/>
    <property type="molecule type" value="Genomic_DNA"/>
</dbReference>
<dbReference type="PIR" id="B84116">
    <property type="entry name" value="B84116"/>
</dbReference>
<dbReference type="RefSeq" id="WP_010899855.1">
    <property type="nucleotide sequence ID" value="NC_002570.2"/>
</dbReference>
<dbReference type="SMR" id="Q9K6J9"/>
<dbReference type="STRING" id="272558.gene:10729643"/>
<dbReference type="GeneID" id="87599279"/>
<dbReference type="KEGG" id="bha:BH3730"/>
<dbReference type="eggNOG" id="COG1129">
    <property type="taxonomic scope" value="Bacteria"/>
</dbReference>
<dbReference type="HOGENOM" id="CLU_000604_92_3_9"/>
<dbReference type="OrthoDB" id="9771863at2"/>
<dbReference type="Proteomes" id="UP000001258">
    <property type="component" value="Chromosome"/>
</dbReference>
<dbReference type="GO" id="GO:0005886">
    <property type="term" value="C:plasma membrane"/>
    <property type="evidence" value="ECO:0007669"/>
    <property type="project" value="UniProtKB-SubCell"/>
</dbReference>
<dbReference type="GO" id="GO:0015611">
    <property type="term" value="F:ABC-type D-ribose transporter activity"/>
    <property type="evidence" value="ECO:0007669"/>
    <property type="project" value="UniProtKB-EC"/>
</dbReference>
<dbReference type="GO" id="GO:0005524">
    <property type="term" value="F:ATP binding"/>
    <property type="evidence" value="ECO:0007669"/>
    <property type="project" value="UniProtKB-KW"/>
</dbReference>
<dbReference type="GO" id="GO:0016887">
    <property type="term" value="F:ATP hydrolysis activity"/>
    <property type="evidence" value="ECO:0007669"/>
    <property type="project" value="InterPro"/>
</dbReference>
<dbReference type="CDD" id="cd03216">
    <property type="entry name" value="ABC_Carb_Monos_I"/>
    <property type="match status" value="1"/>
</dbReference>
<dbReference type="CDD" id="cd03215">
    <property type="entry name" value="ABC_Carb_Monos_II"/>
    <property type="match status" value="1"/>
</dbReference>
<dbReference type="FunFam" id="3.40.50.300:FF:000126">
    <property type="entry name" value="Galactose/methyl galactoside import ATP-binding protein MglA"/>
    <property type="match status" value="1"/>
</dbReference>
<dbReference type="FunFam" id="3.40.50.300:FF:000127">
    <property type="entry name" value="Ribose import ATP-binding protein RbsA"/>
    <property type="match status" value="1"/>
</dbReference>
<dbReference type="Gene3D" id="3.40.50.300">
    <property type="entry name" value="P-loop containing nucleotide triphosphate hydrolases"/>
    <property type="match status" value="2"/>
</dbReference>
<dbReference type="InterPro" id="IPR003593">
    <property type="entry name" value="AAA+_ATPase"/>
</dbReference>
<dbReference type="InterPro" id="IPR050107">
    <property type="entry name" value="ABC_carbohydrate_import_ATPase"/>
</dbReference>
<dbReference type="InterPro" id="IPR003439">
    <property type="entry name" value="ABC_transporter-like_ATP-bd"/>
</dbReference>
<dbReference type="InterPro" id="IPR017871">
    <property type="entry name" value="ABC_transporter-like_CS"/>
</dbReference>
<dbReference type="InterPro" id="IPR027417">
    <property type="entry name" value="P-loop_NTPase"/>
</dbReference>
<dbReference type="PANTHER" id="PTHR43790">
    <property type="entry name" value="CARBOHYDRATE TRANSPORT ATP-BINDING PROTEIN MG119-RELATED"/>
    <property type="match status" value="1"/>
</dbReference>
<dbReference type="PANTHER" id="PTHR43790:SF3">
    <property type="entry name" value="D-ALLOSE IMPORT ATP-BINDING PROTEIN ALSA-RELATED"/>
    <property type="match status" value="1"/>
</dbReference>
<dbReference type="Pfam" id="PF00005">
    <property type="entry name" value="ABC_tran"/>
    <property type="match status" value="2"/>
</dbReference>
<dbReference type="SMART" id="SM00382">
    <property type="entry name" value="AAA"/>
    <property type="match status" value="2"/>
</dbReference>
<dbReference type="SUPFAM" id="SSF52540">
    <property type="entry name" value="P-loop containing nucleoside triphosphate hydrolases"/>
    <property type="match status" value="2"/>
</dbReference>
<dbReference type="PROSITE" id="PS00211">
    <property type="entry name" value="ABC_TRANSPORTER_1"/>
    <property type="match status" value="1"/>
</dbReference>
<dbReference type="PROSITE" id="PS50893">
    <property type="entry name" value="ABC_TRANSPORTER_2"/>
    <property type="match status" value="2"/>
</dbReference>
<dbReference type="PROSITE" id="PS51254">
    <property type="entry name" value="RBSA"/>
    <property type="match status" value="1"/>
</dbReference>
<evidence type="ECO:0000255" key="1">
    <source>
        <dbReference type="HAMAP-Rule" id="MF_01716"/>
    </source>
</evidence>
<comment type="function">
    <text evidence="1">Part of the ABC transporter complex RbsABC involved in ribose import. Responsible for energy coupling to the transport system.</text>
</comment>
<comment type="catalytic activity">
    <reaction evidence="1">
        <text>D-ribose(out) + ATP + H2O = D-ribose(in) + ADP + phosphate + H(+)</text>
        <dbReference type="Rhea" id="RHEA:29903"/>
        <dbReference type="ChEBI" id="CHEBI:15377"/>
        <dbReference type="ChEBI" id="CHEBI:15378"/>
        <dbReference type="ChEBI" id="CHEBI:30616"/>
        <dbReference type="ChEBI" id="CHEBI:43474"/>
        <dbReference type="ChEBI" id="CHEBI:47013"/>
        <dbReference type="ChEBI" id="CHEBI:456216"/>
        <dbReference type="EC" id="7.5.2.7"/>
    </reaction>
</comment>
<comment type="subunit">
    <text evidence="1">The complex is composed of an ATP-binding protein (RbsA), two transmembrane proteins (RbsC) and a solute-binding protein (RbsB).</text>
</comment>
<comment type="subcellular location">
    <subcellularLocation>
        <location evidence="1">Cell membrane</location>
        <topology evidence="1">Peripheral membrane protein</topology>
    </subcellularLocation>
</comment>
<comment type="similarity">
    <text evidence="1">Belongs to the ABC transporter superfamily. Ribose importer (TC 3.A.1.2.1) family.</text>
</comment>
<protein>
    <recommendedName>
        <fullName evidence="1">Ribose import ATP-binding protein RbsA</fullName>
        <ecNumber evidence="1">7.5.2.7</ecNumber>
    </recommendedName>
</protein>
<accession>Q9K6J9</accession>
<name>RBSA_HALH5</name>
<organism>
    <name type="scientific">Halalkalibacterium halodurans (strain ATCC BAA-125 / DSM 18197 / FERM 7344 / JCM 9153 / C-125)</name>
    <name type="common">Bacillus halodurans</name>
    <dbReference type="NCBI Taxonomy" id="272558"/>
    <lineage>
        <taxon>Bacteria</taxon>
        <taxon>Bacillati</taxon>
        <taxon>Bacillota</taxon>
        <taxon>Bacilli</taxon>
        <taxon>Bacillales</taxon>
        <taxon>Bacillaceae</taxon>
        <taxon>Halalkalibacterium (ex Joshi et al. 2022)</taxon>
    </lineage>
</organism>